<reference key="1">
    <citation type="journal article" date="2008" name="Genome Res.">
        <title>The genome of Pelotomaculum thermopropionicum reveals niche-associated evolution in anaerobic microbiota.</title>
        <authorList>
            <person name="Kosaka T."/>
            <person name="Kato S."/>
            <person name="Shimoyama T."/>
            <person name="Ishii S."/>
            <person name="Abe T."/>
            <person name="Watanabe K."/>
        </authorList>
    </citation>
    <scope>NUCLEOTIDE SEQUENCE [LARGE SCALE GENOMIC DNA]</scope>
    <source>
        <strain>DSM 13744 / JCM 10971 / SI</strain>
    </source>
</reference>
<evidence type="ECO:0000255" key="1">
    <source>
        <dbReference type="HAMAP-Rule" id="MF_00406"/>
    </source>
</evidence>
<gene>
    <name evidence="1" type="primary">fabZ</name>
    <name type="ordered locus">PTH_2770</name>
</gene>
<accession>A5CYG8</accession>
<sequence length="140" mass="15506">MLDINQIKEIIPHRYPFLLVDRILSVEDGRKAVGLKNVSANEPYFQGHFPGYPVMPGVLIIEAMAQVGAVAVLRLPEFAGKMAFFAGIDRARFRRQVVPGDQLRIEVELQKLRGTVGKARGAAYVGQELAAEAELMFAVR</sequence>
<organism>
    <name type="scientific">Pelotomaculum thermopropionicum (strain DSM 13744 / JCM 10971 / SI)</name>
    <dbReference type="NCBI Taxonomy" id="370438"/>
    <lineage>
        <taxon>Bacteria</taxon>
        <taxon>Bacillati</taxon>
        <taxon>Bacillota</taxon>
        <taxon>Clostridia</taxon>
        <taxon>Eubacteriales</taxon>
        <taxon>Desulfotomaculaceae</taxon>
        <taxon>Pelotomaculum</taxon>
    </lineage>
</organism>
<name>FABZ_PELTS</name>
<feature type="chain" id="PRO_1000205945" description="3-hydroxyacyl-[acyl-carrier-protein] dehydratase FabZ">
    <location>
        <begin position="1"/>
        <end position="140"/>
    </location>
</feature>
<feature type="active site" evidence="1">
    <location>
        <position position="48"/>
    </location>
</feature>
<proteinExistence type="inferred from homology"/>
<comment type="function">
    <text evidence="1">Involved in unsaturated fatty acids biosynthesis. Catalyzes the dehydration of short chain beta-hydroxyacyl-ACPs and long chain saturated and unsaturated beta-hydroxyacyl-ACPs.</text>
</comment>
<comment type="catalytic activity">
    <reaction evidence="1">
        <text>a (3R)-hydroxyacyl-[ACP] = a (2E)-enoyl-[ACP] + H2O</text>
        <dbReference type="Rhea" id="RHEA:13097"/>
        <dbReference type="Rhea" id="RHEA-COMP:9925"/>
        <dbReference type="Rhea" id="RHEA-COMP:9945"/>
        <dbReference type="ChEBI" id="CHEBI:15377"/>
        <dbReference type="ChEBI" id="CHEBI:78784"/>
        <dbReference type="ChEBI" id="CHEBI:78827"/>
        <dbReference type="EC" id="4.2.1.59"/>
    </reaction>
</comment>
<comment type="subcellular location">
    <subcellularLocation>
        <location evidence="1">Cytoplasm</location>
    </subcellularLocation>
</comment>
<comment type="similarity">
    <text evidence="1">Belongs to the thioester dehydratase family. FabZ subfamily.</text>
</comment>
<dbReference type="EC" id="4.2.1.59" evidence="1"/>
<dbReference type="EMBL" id="AP009389">
    <property type="protein sequence ID" value="BAF60951.1"/>
    <property type="molecule type" value="Genomic_DNA"/>
</dbReference>
<dbReference type="SMR" id="A5CYG8"/>
<dbReference type="STRING" id="370438.PTH_2770"/>
<dbReference type="KEGG" id="pth:PTH_2770"/>
<dbReference type="eggNOG" id="COG0764">
    <property type="taxonomic scope" value="Bacteria"/>
</dbReference>
<dbReference type="HOGENOM" id="CLU_078912_3_0_9"/>
<dbReference type="Proteomes" id="UP000006556">
    <property type="component" value="Chromosome"/>
</dbReference>
<dbReference type="GO" id="GO:0005737">
    <property type="term" value="C:cytoplasm"/>
    <property type="evidence" value="ECO:0007669"/>
    <property type="project" value="UniProtKB-SubCell"/>
</dbReference>
<dbReference type="GO" id="GO:0016020">
    <property type="term" value="C:membrane"/>
    <property type="evidence" value="ECO:0007669"/>
    <property type="project" value="GOC"/>
</dbReference>
<dbReference type="GO" id="GO:0019171">
    <property type="term" value="F:(3R)-hydroxyacyl-[acyl-carrier-protein] dehydratase activity"/>
    <property type="evidence" value="ECO:0007669"/>
    <property type="project" value="UniProtKB-EC"/>
</dbReference>
<dbReference type="GO" id="GO:0006633">
    <property type="term" value="P:fatty acid biosynthetic process"/>
    <property type="evidence" value="ECO:0007669"/>
    <property type="project" value="UniProtKB-UniRule"/>
</dbReference>
<dbReference type="GO" id="GO:0009245">
    <property type="term" value="P:lipid A biosynthetic process"/>
    <property type="evidence" value="ECO:0007669"/>
    <property type="project" value="UniProtKB-UniRule"/>
</dbReference>
<dbReference type="CDD" id="cd01288">
    <property type="entry name" value="FabZ"/>
    <property type="match status" value="1"/>
</dbReference>
<dbReference type="FunFam" id="3.10.129.10:FF:000001">
    <property type="entry name" value="3-hydroxyacyl-[acyl-carrier-protein] dehydratase FabZ"/>
    <property type="match status" value="1"/>
</dbReference>
<dbReference type="Gene3D" id="3.10.129.10">
    <property type="entry name" value="Hotdog Thioesterase"/>
    <property type="match status" value="1"/>
</dbReference>
<dbReference type="HAMAP" id="MF_00406">
    <property type="entry name" value="FabZ"/>
    <property type="match status" value="1"/>
</dbReference>
<dbReference type="InterPro" id="IPR013114">
    <property type="entry name" value="FabA_FabZ"/>
</dbReference>
<dbReference type="InterPro" id="IPR010084">
    <property type="entry name" value="FabZ"/>
</dbReference>
<dbReference type="InterPro" id="IPR029069">
    <property type="entry name" value="HotDog_dom_sf"/>
</dbReference>
<dbReference type="NCBIfam" id="TIGR01750">
    <property type="entry name" value="fabZ"/>
    <property type="match status" value="1"/>
</dbReference>
<dbReference type="NCBIfam" id="NF000582">
    <property type="entry name" value="PRK00006.1"/>
    <property type="match status" value="1"/>
</dbReference>
<dbReference type="PANTHER" id="PTHR30272">
    <property type="entry name" value="3-HYDROXYACYL-[ACYL-CARRIER-PROTEIN] DEHYDRATASE"/>
    <property type="match status" value="1"/>
</dbReference>
<dbReference type="PANTHER" id="PTHR30272:SF1">
    <property type="entry name" value="3-HYDROXYACYL-[ACYL-CARRIER-PROTEIN] DEHYDRATASE"/>
    <property type="match status" value="1"/>
</dbReference>
<dbReference type="Pfam" id="PF07977">
    <property type="entry name" value="FabA"/>
    <property type="match status" value="1"/>
</dbReference>
<dbReference type="SUPFAM" id="SSF54637">
    <property type="entry name" value="Thioesterase/thiol ester dehydrase-isomerase"/>
    <property type="match status" value="1"/>
</dbReference>
<keyword id="KW-0963">Cytoplasm</keyword>
<keyword id="KW-0441">Lipid A biosynthesis</keyword>
<keyword id="KW-0444">Lipid biosynthesis</keyword>
<keyword id="KW-0443">Lipid metabolism</keyword>
<keyword id="KW-0456">Lyase</keyword>
<keyword id="KW-1185">Reference proteome</keyword>
<protein>
    <recommendedName>
        <fullName evidence="1">3-hydroxyacyl-[acyl-carrier-protein] dehydratase FabZ</fullName>
        <ecNumber evidence="1">4.2.1.59</ecNumber>
    </recommendedName>
    <alternativeName>
        <fullName evidence="1">(3R)-hydroxymyristoyl-[acyl-carrier-protein] dehydratase</fullName>
        <shortName evidence="1">(3R)-hydroxymyristoyl-ACP dehydrase</shortName>
    </alternativeName>
    <alternativeName>
        <fullName evidence="1">Beta-hydroxyacyl-ACP dehydratase</fullName>
    </alternativeName>
</protein>